<protein>
    <recommendedName>
        <fullName>Regulator of Ty1 transposition protein 102</fullName>
    </recommendedName>
</protein>
<comment type="function">
    <text>Probable component of the chromatin structure-remodeling complex (RSC) which is involved in transcription regulation and nucleosome positioning. RSC is responsible for the transfer of a histone octamer from a nucleosome core particle to naked DNA. The reaction requires ATP and involves an activated RSC-nucleosome intermediate. Remodeling reaction also involves DNA translocation, DNA twist and conformational change. As a reconfigurer of centromeric and flanking nucleosomes, RSC complex is required both for proper kinetochore function in chromosome segregation and, via a PKC1-dependent signaling pathway, for organization of the cellular cytoskeleton. Probable component of the SWI/SNF complex, an ATP-dependent chromatin-remodeling complex, is required for the positive and negative regulation of gene expression of a large number of genes. It changes chromatin structure by altering DNA-histone contacts within a nucleosome, leading eventually to a change in nucleosome position, thus facilitating or repressing binding of gene-specific transcription factors.</text>
</comment>
<comment type="subunit">
    <text evidence="4 5 6 7">Interacts with STH1 and SWI3. Component of the two forms of the RSC complex composed of at least either RSC1 or RSC2, and ARP7, ARP9, LDB7, NPL6, RSC3, RSC30, RSC4, RSC58, RSC6, RSC8, RSC9, SFH1, STH1, HTL1 and probably RTT102. The complexes interact with histone and histone variant components of centromeric chromatin. Probable additional component of the SWI/SNF global transcription activator complex. The 1.14 MDa SWI/SNF complex is composed of 11 different subunits: one copy each of SWI1, SNF2/SWI2, SNF5, SNF12/SWP73, ARP7/SWP61, ARP9/SWP59; two copies each of SWI3, SNF6, SNF11, SWP82; and three copies of TAF14/SWP29.</text>
</comment>
<comment type="interaction">
    <interactant intactId="EBI-23637">
        <id>P53330</id>
    </interactant>
    <interactant intactId="EBI-18410">
        <id>P32597</id>
        <label>STH1</label>
    </interactant>
    <organismsDiffer>false</organismsDiffer>
    <experiments>6</experiments>
</comment>
<comment type="interaction">
    <interactant intactId="EBI-23637">
        <id>P53330</id>
    </interactant>
    <interactant intactId="EBI-18622">
        <id>P32591</id>
        <label>SWI3</label>
    </interactant>
    <organismsDiffer>false</organismsDiffer>
    <experiments>4</experiments>
</comment>
<comment type="subcellular location">
    <subcellularLocation>
        <location evidence="2">Nucleus</location>
    </subcellularLocation>
</comment>
<comment type="miscellaneous">
    <text evidence="3">Present with 1550 molecules/cell in log phase SD medium.</text>
</comment>
<comment type="sequence caution" evidence="8">
    <conflict type="erroneous initiation">
        <sequence resource="EMBL-CDS" id="AAS56708"/>
    </conflict>
</comment>
<comment type="sequence caution" evidence="8">
    <conflict type="erroneous initiation">
        <sequence resource="EMBL-CDS" id="CAA58897"/>
    </conflict>
</comment>
<comment type="sequence caution" evidence="8">
    <conflict type="erroneous initiation">
        <sequence resource="EMBL-CDS" id="CAA97305"/>
    </conflict>
</comment>
<organism>
    <name type="scientific">Saccharomyces cerevisiae (strain ATCC 204508 / S288c)</name>
    <name type="common">Baker's yeast</name>
    <dbReference type="NCBI Taxonomy" id="559292"/>
    <lineage>
        <taxon>Eukaryota</taxon>
        <taxon>Fungi</taxon>
        <taxon>Dikarya</taxon>
        <taxon>Ascomycota</taxon>
        <taxon>Saccharomycotina</taxon>
        <taxon>Saccharomycetes</taxon>
        <taxon>Saccharomycetales</taxon>
        <taxon>Saccharomycetaceae</taxon>
        <taxon>Saccharomyces</taxon>
    </lineage>
</organism>
<reference key="1">
    <citation type="journal article" date="1997" name="Yeast">
        <title>The sequence of a 8 kb segment on the right arm of yeast chromosome VII identifies four new open reading frames and the genes for yTAFII145.</title>
        <authorList>
            <person name="Ruzzi M."/>
            <person name="Marconi A."/>
            <person name="Saliola M."/>
            <person name="Fabiani L."/>
            <person name="Montebove F."/>
            <person name="Frontali L."/>
        </authorList>
    </citation>
    <scope>NUCLEOTIDE SEQUENCE [GENOMIC DNA]</scope>
    <source>
        <strain>ATCC 204508 / S288c</strain>
    </source>
</reference>
<reference key="2">
    <citation type="journal article" date="1997" name="Nature">
        <title>The nucleotide sequence of Saccharomyces cerevisiae chromosome VII.</title>
        <authorList>
            <person name="Tettelin H."/>
            <person name="Agostoni-Carbone M.L."/>
            <person name="Albermann K."/>
            <person name="Albers M."/>
            <person name="Arroyo J."/>
            <person name="Backes U."/>
            <person name="Barreiros T."/>
            <person name="Bertani I."/>
            <person name="Bjourson A.J."/>
            <person name="Brueckner M."/>
            <person name="Bruschi C.V."/>
            <person name="Carignani G."/>
            <person name="Castagnoli L."/>
            <person name="Cerdan E."/>
            <person name="Clemente M.L."/>
            <person name="Coblenz A."/>
            <person name="Coglievina M."/>
            <person name="Coissac E."/>
            <person name="Defoor E."/>
            <person name="Del Bino S."/>
            <person name="Delius H."/>
            <person name="Delneri D."/>
            <person name="de Wergifosse P."/>
            <person name="Dujon B."/>
            <person name="Durand P."/>
            <person name="Entian K.-D."/>
            <person name="Eraso P."/>
            <person name="Escribano V."/>
            <person name="Fabiani L."/>
            <person name="Fartmann B."/>
            <person name="Feroli F."/>
            <person name="Feuermann M."/>
            <person name="Frontali L."/>
            <person name="Garcia-Gonzalez M."/>
            <person name="Garcia-Saez M.I."/>
            <person name="Goffeau A."/>
            <person name="Guerreiro P."/>
            <person name="Hani J."/>
            <person name="Hansen M."/>
            <person name="Hebling U."/>
            <person name="Hernandez K."/>
            <person name="Heumann K."/>
            <person name="Hilger F."/>
            <person name="Hofmann B."/>
            <person name="Indge K.J."/>
            <person name="James C.M."/>
            <person name="Klima R."/>
            <person name="Koetter P."/>
            <person name="Kramer B."/>
            <person name="Kramer W."/>
            <person name="Lauquin G."/>
            <person name="Leuther H."/>
            <person name="Louis E.J."/>
            <person name="Maillier E."/>
            <person name="Marconi A."/>
            <person name="Martegani E."/>
            <person name="Mazon M.J."/>
            <person name="Mazzoni C."/>
            <person name="McReynolds A.D.K."/>
            <person name="Melchioretto P."/>
            <person name="Mewes H.-W."/>
            <person name="Minenkova O."/>
            <person name="Mueller-Auer S."/>
            <person name="Nawrocki A."/>
            <person name="Netter P."/>
            <person name="Neu R."/>
            <person name="Nombela C."/>
            <person name="Oliver S.G."/>
            <person name="Panzeri L."/>
            <person name="Paoluzi S."/>
            <person name="Plevani P."/>
            <person name="Portetelle D."/>
            <person name="Portillo F."/>
            <person name="Potier S."/>
            <person name="Purnelle B."/>
            <person name="Rieger M."/>
            <person name="Riles L."/>
            <person name="Rinaldi T."/>
            <person name="Robben J."/>
            <person name="Rodrigues-Pousada C."/>
            <person name="Rodriguez-Belmonte E."/>
            <person name="Rodriguez-Torres A.M."/>
            <person name="Rose M."/>
            <person name="Ruzzi M."/>
            <person name="Saliola M."/>
            <person name="Sanchez-Perez M."/>
            <person name="Schaefer B."/>
            <person name="Schaefer M."/>
            <person name="Scharfe M."/>
            <person name="Schmidheini T."/>
            <person name="Schreer A."/>
            <person name="Skala J."/>
            <person name="Souciet J.-L."/>
            <person name="Steensma H.Y."/>
            <person name="Talla E."/>
            <person name="Thierry A."/>
            <person name="Vandenbol M."/>
            <person name="van der Aart Q.J.M."/>
            <person name="Van Dyck L."/>
            <person name="Vanoni M."/>
            <person name="Verhasselt P."/>
            <person name="Voet M."/>
            <person name="Volckaert G."/>
            <person name="Wambutt R."/>
            <person name="Watson M.D."/>
            <person name="Weber N."/>
            <person name="Wedler E."/>
            <person name="Wedler H."/>
            <person name="Wipfli P."/>
            <person name="Wolf K."/>
            <person name="Wright L.F."/>
            <person name="Zaccaria P."/>
            <person name="Zimmermann M."/>
            <person name="Zollner A."/>
            <person name="Kleine K."/>
        </authorList>
    </citation>
    <scope>NUCLEOTIDE SEQUENCE [LARGE SCALE GENOMIC DNA]</scope>
    <source>
        <strain>ATCC 204508 / S288c</strain>
    </source>
</reference>
<reference key="3">
    <citation type="journal article" date="2014" name="G3 (Bethesda)">
        <title>The reference genome sequence of Saccharomyces cerevisiae: Then and now.</title>
        <authorList>
            <person name="Engel S.R."/>
            <person name="Dietrich F.S."/>
            <person name="Fisk D.G."/>
            <person name="Binkley G."/>
            <person name="Balakrishnan R."/>
            <person name="Costanzo M.C."/>
            <person name="Dwight S.S."/>
            <person name="Hitz B.C."/>
            <person name="Karra K."/>
            <person name="Nash R.S."/>
            <person name="Weng S."/>
            <person name="Wong E.D."/>
            <person name="Lloyd P."/>
            <person name="Skrzypek M.S."/>
            <person name="Miyasato S.R."/>
            <person name="Simison M."/>
            <person name="Cherry J.M."/>
        </authorList>
    </citation>
    <scope>GENOME REANNOTATION</scope>
    <source>
        <strain>ATCC 204508 / S288c</strain>
    </source>
</reference>
<reference key="4">
    <citation type="journal article" date="2007" name="Genome Res.">
        <title>Approaching a complete repository of sequence-verified protein-encoding clones for Saccharomyces cerevisiae.</title>
        <authorList>
            <person name="Hu Y."/>
            <person name="Rolfs A."/>
            <person name="Bhullar B."/>
            <person name="Murthy T.V.S."/>
            <person name="Zhu C."/>
            <person name="Berger M.F."/>
            <person name="Camargo A.A."/>
            <person name="Kelley F."/>
            <person name="McCarron S."/>
            <person name="Jepson D."/>
            <person name="Richardson A."/>
            <person name="Raphael J."/>
            <person name="Moreira D."/>
            <person name="Taycher E."/>
            <person name="Zuo D."/>
            <person name="Mohr S."/>
            <person name="Kane M.F."/>
            <person name="Williamson J."/>
            <person name="Simpson A.J.G."/>
            <person name="Bulyk M.L."/>
            <person name="Harlow E."/>
            <person name="Marsischky G."/>
            <person name="Kolodner R.D."/>
            <person name="LaBaer J."/>
        </authorList>
    </citation>
    <scope>NUCLEOTIDE SEQUENCE [GENOMIC DNA]</scope>
    <source>
        <strain>ATCC 204508 / S288c</strain>
    </source>
</reference>
<reference key="5">
    <citation type="journal article" date="2001" name="Genetics">
        <title>Multiple regulators of Ty1 transposition in Saccharomyces cerevisiae have conserved roles in genome maintenance.</title>
        <authorList>
            <person name="Scholes D.T."/>
            <person name="Banerjee M."/>
            <person name="Bowen B."/>
            <person name="Curcio M.J."/>
        </authorList>
    </citation>
    <scope>IDENTIFICATION</scope>
</reference>
<reference key="6">
    <citation type="journal article" date="2003" name="Nature">
        <title>Sequencing and comparison of yeast species to identify genes and regulatory elements.</title>
        <authorList>
            <person name="Kellis M."/>
            <person name="Patterson N."/>
            <person name="Endrizzi M."/>
            <person name="Birren B.W."/>
            <person name="Lander E.S."/>
        </authorList>
    </citation>
    <scope>IDENTIFICATION OF PROBABLE INITIATION SITE</scope>
</reference>
<reference key="7">
    <citation type="journal article" date="2003" name="Nature">
        <title>Global analysis of protein localization in budding yeast.</title>
        <authorList>
            <person name="Huh W.-K."/>
            <person name="Falvo J.V."/>
            <person name="Gerke L.C."/>
            <person name="Carroll A.S."/>
            <person name="Howson R.W."/>
            <person name="Weissman J.S."/>
            <person name="O'Shea E.K."/>
        </authorList>
    </citation>
    <scope>SUBCELLULAR LOCATION [LARGE SCALE ANALYSIS]</scope>
</reference>
<reference key="8">
    <citation type="journal article" date="2003" name="Nature">
        <title>Global analysis of protein expression in yeast.</title>
        <authorList>
            <person name="Ghaemmaghami S."/>
            <person name="Huh W.-K."/>
            <person name="Bower K."/>
            <person name="Howson R.W."/>
            <person name="Belle A."/>
            <person name="Dephoure N."/>
            <person name="O'Shea E.K."/>
            <person name="Weissman J.S."/>
        </authorList>
    </citation>
    <scope>LEVEL OF PROTEIN EXPRESSION [LARGE SCALE ANALYSIS]</scope>
</reference>
<reference key="9">
    <citation type="journal article" date="2003" name="Science">
        <title>Finding functional features in Saccharomyces genomes by phylogenetic footprinting.</title>
        <authorList>
            <person name="Cliften P.F."/>
            <person name="Sudarsanam P."/>
            <person name="Desikan A."/>
            <person name="Fulton L."/>
            <person name="Fulton B."/>
            <person name="Majors J."/>
            <person name="Waterston R."/>
            <person name="Cohen B.A."/>
            <person name="Johnston M."/>
        </authorList>
    </citation>
    <scope>IDENTIFICATION OF PROBABLE INITIATION SITE</scope>
</reference>
<reference key="10">
    <citation type="journal article" date="2004" name="Biochem. Soc. Trans.">
        <title>Proteomic analysis of chromatin-modifying complexes in Saccharomyces cerevisiae identifies novel subunits.</title>
        <authorList>
            <person name="Lee K.K."/>
            <person name="Prochasson P."/>
            <person name="Florens L."/>
            <person name="Swanson S.K."/>
            <person name="Washburn M.P."/>
            <person name="Workman J.L."/>
        </authorList>
    </citation>
    <scope>INTERACTION WITH STH1 AND SWI3</scope>
    <scope>IDENTIFICATION IN THE SWI/SNF COMPLEX</scope>
</reference>
<reference key="11">
    <citation type="journal article" date="2004" name="Mol. Cell">
        <title>High-definition macromolecular composition of yeast RNA-processing complexes.</title>
        <authorList>
            <person name="Krogan N.J."/>
            <person name="Peng W.-T."/>
            <person name="Cagney G."/>
            <person name="Robinson M.D."/>
            <person name="Haw R."/>
            <person name="Zhong G."/>
            <person name="Guo X."/>
            <person name="Zhang X."/>
            <person name="Canadien V."/>
            <person name="Richards D.P."/>
            <person name="Beattie B.K."/>
            <person name="Lalev A."/>
            <person name="Zhang W."/>
            <person name="Davierwala A.P."/>
            <person name="Mnaimneh S."/>
            <person name="Starostine A."/>
            <person name="Tikuisis A.P."/>
            <person name="Grigull J."/>
            <person name="Datta N."/>
            <person name="Bray J.E."/>
            <person name="Hughes T.R."/>
            <person name="Emili A."/>
            <person name="Greenblatt J.F."/>
        </authorList>
    </citation>
    <scope>IDENTIFICATION IN THE RSC COMPLEX</scope>
</reference>
<reference key="12">
    <citation type="journal article" date="2004" name="Mol. Cell. Biol.">
        <title>The ctf13-30/CTF13 genomic haploinsufficiency modifier screen identifies the yeast chromatin remodeling complex RSC, which is required for the establishment of sister chromatid cohesion.</title>
        <authorList>
            <person name="Baetz K.K."/>
            <person name="Krogan N.J."/>
            <person name="Emili A."/>
            <person name="Greenblatt J."/>
            <person name="Hieter P."/>
        </authorList>
    </citation>
    <scope>IDENTIFICATION IN THE RSC COMPLEX</scope>
</reference>
<reference key="13">
    <citation type="journal article" date="2004" name="Mol. Cell. Proteomics">
        <title>Applicability of tandem affinity purification MudPIT to pathway proteomics in yeast.</title>
        <authorList>
            <person name="Graumann J."/>
            <person name="Dunipace L.A."/>
            <person name="Seol J.H."/>
            <person name="McDonald W.H."/>
            <person name="Yates J.R. III"/>
            <person name="Wold B.J."/>
            <person name="Deshaies R.J."/>
        </authorList>
    </citation>
    <scope>IDENTIFICATION IN THE SWI/SNF COMPLEX</scope>
</reference>
<reference key="14">
    <citation type="journal article" date="2007" name="J. Proteome Res.">
        <title>Large-scale phosphorylation analysis of alpha-factor-arrested Saccharomyces cerevisiae.</title>
        <authorList>
            <person name="Li X."/>
            <person name="Gerber S.A."/>
            <person name="Rudner A.D."/>
            <person name="Beausoleil S.A."/>
            <person name="Haas W."/>
            <person name="Villen J."/>
            <person name="Elias J.E."/>
            <person name="Gygi S.P."/>
        </authorList>
    </citation>
    <scope>PHOSPHORYLATION [LARGE SCALE ANALYSIS] AT SER-122</scope>
    <scope>IDENTIFICATION BY MASS SPECTROMETRY [LARGE SCALE ANALYSIS]</scope>
    <source>
        <strain>ADR376</strain>
    </source>
</reference>
<reference key="15">
    <citation type="journal article" date="2009" name="Science">
        <title>Global analysis of Cdk1 substrate phosphorylation sites provides insights into evolution.</title>
        <authorList>
            <person name="Holt L.J."/>
            <person name="Tuch B.B."/>
            <person name="Villen J."/>
            <person name="Johnson A.D."/>
            <person name="Gygi S.P."/>
            <person name="Morgan D.O."/>
        </authorList>
    </citation>
    <scope>PHOSPHORYLATION [LARGE SCALE ANALYSIS] AT SER-77 AND SER-122</scope>
    <scope>IDENTIFICATION BY MASS SPECTROMETRY [LARGE SCALE ANALYSIS]</scope>
</reference>
<sequence>MDPQTLITKANKVSYYGNPTSKESWRYDWYQPSKVSSNVQQPQQQLGDMENNLEKYPFRYKTWLRNQEDEKNLQRESCEDILDLKEFDRRILKKSLMTSHTKGDTSKATGAPSANQGDEALSVDDIRGAVGNSEAIPGLSAGVNNDNTKESKDVKMN</sequence>
<proteinExistence type="evidence at protein level"/>
<keyword id="KW-0002">3D-structure</keyword>
<keyword id="KW-0539">Nucleus</keyword>
<keyword id="KW-0597">Phosphoprotein</keyword>
<keyword id="KW-1185">Reference proteome</keyword>
<keyword id="KW-0804">Transcription</keyword>
<keyword id="KW-0805">Transcription regulation</keyword>
<name>RT102_YEAST</name>
<evidence type="ECO:0000256" key="1">
    <source>
        <dbReference type="SAM" id="MobiDB-lite"/>
    </source>
</evidence>
<evidence type="ECO:0000269" key="2">
    <source>
    </source>
</evidence>
<evidence type="ECO:0000269" key="3">
    <source>
    </source>
</evidence>
<evidence type="ECO:0000269" key="4">
    <source>
    </source>
</evidence>
<evidence type="ECO:0000269" key="5">
    <source>
    </source>
</evidence>
<evidence type="ECO:0000269" key="6">
    <source>
    </source>
</evidence>
<evidence type="ECO:0000269" key="7">
    <source>
    </source>
</evidence>
<evidence type="ECO:0000305" key="8"/>
<evidence type="ECO:0007744" key="9">
    <source>
    </source>
</evidence>
<evidence type="ECO:0007744" key="10">
    <source>
    </source>
</evidence>
<evidence type="ECO:0007829" key="11">
    <source>
        <dbReference type="PDB" id="4I6M"/>
    </source>
</evidence>
<feature type="chain" id="PRO_0000097501" description="Regulator of Ty1 transposition protein 102">
    <location>
        <begin position="1"/>
        <end position="157"/>
    </location>
</feature>
<feature type="region of interest" description="Disordered" evidence="1">
    <location>
        <begin position="95"/>
        <end position="157"/>
    </location>
</feature>
<feature type="compositionally biased region" description="Polar residues" evidence="1">
    <location>
        <begin position="96"/>
        <end position="116"/>
    </location>
</feature>
<feature type="compositionally biased region" description="Basic and acidic residues" evidence="1">
    <location>
        <begin position="147"/>
        <end position="157"/>
    </location>
</feature>
<feature type="modified residue" description="Phosphoserine" evidence="10">
    <location>
        <position position="77"/>
    </location>
</feature>
<feature type="modified residue" description="Phosphoserine" evidence="9 10">
    <location>
        <position position="122"/>
    </location>
</feature>
<feature type="helix" evidence="11">
    <location>
        <begin position="3"/>
        <end position="9"/>
    </location>
</feature>
<feature type="strand" evidence="11">
    <location>
        <begin position="25"/>
        <end position="30"/>
    </location>
</feature>
<feature type="strand" evidence="11">
    <location>
        <begin position="60"/>
        <end position="65"/>
    </location>
</feature>
<feature type="strand" evidence="11">
    <location>
        <begin position="86"/>
        <end position="88"/>
    </location>
</feature>
<accession>P53330</accession>
<accession>D6VV52</accession>
<dbReference type="EMBL" id="X84098">
    <property type="protein sequence ID" value="CAA58897.1"/>
    <property type="status" value="ALT_INIT"/>
    <property type="molecule type" value="Genomic_DNA"/>
</dbReference>
<dbReference type="EMBL" id="Z73060">
    <property type="protein sequence ID" value="CAA97305.1"/>
    <property type="status" value="ALT_INIT"/>
    <property type="molecule type" value="Genomic_DNA"/>
</dbReference>
<dbReference type="EMBL" id="AY558382">
    <property type="protein sequence ID" value="AAS56708.1"/>
    <property type="status" value="ALT_INIT"/>
    <property type="molecule type" value="Genomic_DNA"/>
</dbReference>
<dbReference type="EMBL" id="BK006941">
    <property type="protein sequence ID" value="DAA08363.1"/>
    <property type="molecule type" value="Genomic_DNA"/>
</dbReference>
<dbReference type="PIR" id="S64608">
    <property type="entry name" value="S64608"/>
</dbReference>
<dbReference type="RefSeq" id="NP_011791.4">
    <property type="nucleotide sequence ID" value="NM_001181404.3"/>
</dbReference>
<dbReference type="PDB" id="4I6M">
    <property type="method" value="X-ray"/>
    <property type="resolution" value="2.80 A"/>
    <property type="chains" value="D=1-157"/>
</dbReference>
<dbReference type="PDB" id="5TGC">
    <property type="method" value="X-ray"/>
    <property type="resolution" value="3.25 A"/>
    <property type="chains" value="C/F=1-157"/>
</dbReference>
<dbReference type="PDB" id="6KW3">
    <property type="method" value="EM"/>
    <property type="resolution" value="7.13 A"/>
    <property type="chains" value="h=1-157"/>
</dbReference>
<dbReference type="PDB" id="6KW4">
    <property type="method" value="EM"/>
    <property type="resolution" value="7.55 A"/>
    <property type="chains" value="h=1-157"/>
</dbReference>
<dbReference type="PDB" id="6KW5">
    <property type="method" value="EM"/>
    <property type="resolution" value="10.13 A"/>
    <property type="chains" value="h=1-157"/>
</dbReference>
<dbReference type="PDB" id="6TDA">
    <property type="method" value="EM"/>
    <property type="resolution" value="15.00 A"/>
    <property type="chains" value="V=1-157"/>
</dbReference>
<dbReference type="PDB" id="6UXW">
    <property type="method" value="EM"/>
    <property type="resolution" value="8.96 A"/>
    <property type="chains" value="Z=1-157"/>
</dbReference>
<dbReference type="PDB" id="6V92">
    <property type="method" value="EM"/>
    <property type="resolution" value="20.00 A"/>
    <property type="chains" value="P=1-157"/>
</dbReference>
<dbReference type="PDB" id="6VZ4">
    <property type="method" value="EM"/>
    <property type="resolution" value="3.90 A"/>
    <property type="chains" value="N=1-157"/>
</dbReference>
<dbReference type="PDB" id="6VZG">
    <property type="method" value="EM"/>
    <property type="resolution" value="4.20 A"/>
    <property type="chains" value="N=1-157"/>
</dbReference>
<dbReference type="PDB" id="7C4J">
    <property type="method" value="EM"/>
    <property type="resolution" value="2.89 A"/>
    <property type="chains" value="J=1-157"/>
</dbReference>
<dbReference type="PDB" id="7EGP">
    <property type="method" value="EM"/>
    <property type="resolution" value="6.90 A"/>
    <property type="chains" value="L=1-157"/>
</dbReference>
<dbReference type="PDBsum" id="4I6M"/>
<dbReference type="PDBsum" id="5TGC"/>
<dbReference type="PDBsum" id="6KW3"/>
<dbReference type="PDBsum" id="6KW4"/>
<dbReference type="PDBsum" id="6KW5"/>
<dbReference type="PDBsum" id="6TDA"/>
<dbReference type="PDBsum" id="6UXW"/>
<dbReference type="PDBsum" id="6V92"/>
<dbReference type="PDBsum" id="6VZ4"/>
<dbReference type="PDBsum" id="6VZG"/>
<dbReference type="PDBsum" id="7C4J"/>
<dbReference type="PDBsum" id="7EGP"/>
<dbReference type="EMDB" id="EMD-0777"/>
<dbReference type="EMDB" id="EMD-0778"/>
<dbReference type="EMDB" id="EMD-0779"/>
<dbReference type="EMDB" id="EMD-10465"/>
<dbReference type="EMDB" id="EMD-20934"/>
<dbReference type="EMDB" id="EMD-21114"/>
<dbReference type="EMDB" id="EMD-21484"/>
<dbReference type="EMDB" id="EMD-21489"/>
<dbReference type="EMDB" id="EMD-30285"/>
<dbReference type="EMDB" id="EMD-31137"/>
<dbReference type="SMR" id="P53330"/>
<dbReference type="BioGRID" id="33525">
    <property type="interactions" value="154"/>
</dbReference>
<dbReference type="ComplexPortal" id="CPX-1150">
    <property type="entry name" value="SWI/SNF chromatin remodelling complex"/>
</dbReference>
<dbReference type="ComplexPortal" id="CPX-1888">
    <property type="entry name" value="RSC chromatin remodelling complex, variant RSC2"/>
</dbReference>
<dbReference type="ComplexPortal" id="CPX-1889">
    <property type="entry name" value="RSC chromatin remodelling complex, variant RSC1"/>
</dbReference>
<dbReference type="DIP" id="DIP-3864N"/>
<dbReference type="FunCoup" id="P53330">
    <property type="interactions" value="390"/>
</dbReference>
<dbReference type="IntAct" id="P53330">
    <property type="interactions" value="65"/>
</dbReference>
<dbReference type="MINT" id="P53330"/>
<dbReference type="STRING" id="4932.YGR275W"/>
<dbReference type="GlyGen" id="P53330">
    <property type="glycosylation" value="1 site, 1 O-linked glycan (1 site)"/>
</dbReference>
<dbReference type="iPTMnet" id="P53330"/>
<dbReference type="PaxDb" id="4932-YGR275W"/>
<dbReference type="PeptideAtlas" id="P53330"/>
<dbReference type="EnsemblFungi" id="YGR275W_mRNA">
    <property type="protein sequence ID" value="YGR275W"/>
    <property type="gene ID" value="YGR275W"/>
</dbReference>
<dbReference type="GeneID" id="853192"/>
<dbReference type="KEGG" id="sce:YGR275W"/>
<dbReference type="AGR" id="SGD:S000003507"/>
<dbReference type="SGD" id="S000003507">
    <property type="gene designation" value="RTT102"/>
</dbReference>
<dbReference type="VEuPathDB" id="FungiDB:YGR275W"/>
<dbReference type="eggNOG" id="ENOG502SEGN">
    <property type="taxonomic scope" value="Eukaryota"/>
</dbReference>
<dbReference type="HOGENOM" id="CLU_118233_0_0_1"/>
<dbReference type="InParanoid" id="P53330"/>
<dbReference type="OMA" id="LMTSHTK"/>
<dbReference type="OrthoDB" id="4063132at2759"/>
<dbReference type="BioCyc" id="YEAST:G3O-30940-MONOMER"/>
<dbReference type="BioGRID-ORCS" id="853192">
    <property type="hits" value="0 hits in 10 CRISPR screens"/>
</dbReference>
<dbReference type="EvolutionaryTrace" id="P53330"/>
<dbReference type="PRO" id="PR:P53330"/>
<dbReference type="Proteomes" id="UP000002311">
    <property type="component" value="Chromosome VII"/>
</dbReference>
<dbReference type="RNAct" id="P53330">
    <property type="molecule type" value="protein"/>
</dbReference>
<dbReference type="GO" id="GO:0000785">
    <property type="term" value="C:chromatin"/>
    <property type="evidence" value="ECO:0000303"/>
    <property type="project" value="ComplexPortal"/>
</dbReference>
<dbReference type="GO" id="GO:0005634">
    <property type="term" value="C:nucleus"/>
    <property type="evidence" value="ECO:0007005"/>
    <property type="project" value="SGD"/>
</dbReference>
<dbReference type="GO" id="GO:0016586">
    <property type="term" value="C:RSC-type complex"/>
    <property type="evidence" value="ECO:0000314"/>
    <property type="project" value="SGD"/>
</dbReference>
<dbReference type="GO" id="GO:0016514">
    <property type="term" value="C:SWI/SNF complex"/>
    <property type="evidence" value="ECO:0000314"/>
    <property type="project" value="SGD"/>
</dbReference>
<dbReference type="GO" id="GO:0015616">
    <property type="term" value="F:DNA translocase activity"/>
    <property type="evidence" value="ECO:0000314"/>
    <property type="project" value="SGD"/>
</dbReference>
<dbReference type="GO" id="GO:0006338">
    <property type="term" value="P:chromatin remodeling"/>
    <property type="evidence" value="ECO:0000314"/>
    <property type="project" value="ComplexPortal"/>
</dbReference>
<dbReference type="GO" id="GO:0007059">
    <property type="term" value="P:chromosome segregation"/>
    <property type="evidence" value="ECO:0000315"/>
    <property type="project" value="SGD"/>
</dbReference>
<dbReference type="GO" id="GO:0006337">
    <property type="term" value="P:nucleosome disassembly"/>
    <property type="evidence" value="ECO:0000314"/>
    <property type="project" value="SGD"/>
</dbReference>
<dbReference type="GO" id="GO:0006357">
    <property type="term" value="P:regulation of transcription by RNA polymerase II"/>
    <property type="evidence" value="ECO:0000314"/>
    <property type="project" value="ComplexPortal"/>
</dbReference>
<dbReference type="GO" id="GO:0006368">
    <property type="term" value="P:transcription elongation by RNA polymerase II"/>
    <property type="evidence" value="ECO:0000314"/>
    <property type="project" value="SGD"/>
</dbReference>
<dbReference type="DisProt" id="DP01392"/>
<dbReference type="Gene3D" id="6.20.420.10">
    <property type="match status" value="1"/>
</dbReference>
<dbReference type="InterPro" id="IPR018304">
    <property type="entry name" value="Rtt102"/>
</dbReference>
<dbReference type="Pfam" id="PF09510">
    <property type="entry name" value="Rtt102p"/>
    <property type="match status" value="1"/>
</dbReference>
<gene>
    <name type="primary">RTT102</name>
    <name type="ordered locus">YGR275W</name>
    <name type="ORF">G9378</name>
</gene>